<organism>
    <name type="scientific">Pseudomonas fluorescens (strain ATCC BAA-477 / NRRL B-23932 / Pf-5)</name>
    <dbReference type="NCBI Taxonomy" id="220664"/>
    <lineage>
        <taxon>Bacteria</taxon>
        <taxon>Pseudomonadati</taxon>
        <taxon>Pseudomonadota</taxon>
        <taxon>Gammaproteobacteria</taxon>
        <taxon>Pseudomonadales</taxon>
        <taxon>Pseudomonadaceae</taxon>
        <taxon>Pseudomonas</taxon>
    </lineage>
</organism>
<protein>
    <recommendedName>
        <fullName evidence="1">Formimidoylglutamase</fullName>
        <ecNumber evidence="1">3.5.3.8</ecNumber>
    </recommendedName>
    <alternativeName>
        <fullName evidence="1">Formiminoglutamase</fullName>
    </alternativeName>
    <alternativeName>
        <fullName evidence="1">Formiminoglutamate hydrolase</fullName>
    </alternativeName>
</protein>
<accession>Q4KJT9</accession>
<feature type="chain" id="PRO_0000258255" description="Formimidoylglutamase">
    <location>
        <begin position="1"/>
        <end position="312"/>
    </location>
</feature>
<feature type="binding site" evidence="1">
    <location>
        <position position="123"/>
    </location>
    <ligand>
        <name>Mn(2+)</name>
        <dbReference type="ChEBI" id="CHEBI:29035"/>
        <label>1</label>
    </ligand>
</feature>
<feature type="binding site" evidence="1">
    <location>
        <position position="152"/>
    </location>
    <ligand>
        <name>Mn(2+)</name>
        <dbReference type="ChEBI" id="CHEBI:29035"/>
        <label>1</label>
    </ligand>
</feature>
<feature type="binding site" evidence="1">
    <location>
        <position position="152"/>
    </location>
    <ligand>
        <name>Mn(2+)</name>
        <dbReference type="ChEBI" id="CHEBI:29035"/>
        <label>2</label>
    </ligand>
</feature>
<feature type="binding site" evidence="1">
    <location>
        <position position="154"/>
    </location>
    <ligand>
        <name>Mn(2+)</name>
        <dbReference type="ChEBI" id="CHEBI:29035"/>
        <label>2</label>
    </ligand>
</feature>
<feature type="binding site" evidence="1">
    <location>
        <position position="156"/>
    </location>
    <ligand>
        <name>Mn(2+)</name>
        <dbReference type="ChEBI" id="CHEBI:29035"/>
        <label>1</label>
    </ligand>
</feature>
<feature type="binding site" evidence="1">
    <location>
        <position position="243"/>
    </location>
    <ligand>
        <name>Mn(2+)</name>
        <dbReference type="ChEBI" id="CHEBI:29035"/>
        <label>1</label>
    </ligand>
</feature>
<feature type="binding site" evidence="1">
    <location>
        <position position="243"/>
    </location>
    <ligand>
        <name>Mn(2+)</name>
        <dbReference type="ChEBI" id="CHEBI:29035"/>
        <label>2</label>
    </ligand>
</feature>
<feature type="binding site" evidence="1">
    <location>
        <position position="245"/>
    </location>
    <ligand>
        <name>Mn(2+)</name>
        <dbReference type="ChEBI" id="CHEBI:29035"/>
        <label>2</label>
    </ligand>
</feature>
<name>HUTGL_PSEF5</name>
<gene>
    <name type="ordered locus">PFL_0349</name>
</gene>
<evidence type="ECO:0000255" key="1">
    <source>
        <dbReference type="HAMAP-Rule" id="MF_00737"/>
    </source>
</evidence>
<proteinExistence type="inferred from homology"/>
<keyword id="KW-0369">Histidine metabolism</keyword>
<keyword id="KW-0378">Hydrolase</keyword>
<keyword id="KW-0464">Manganese</keyword>
<keyword id="KW-0479">Metal-binding</keyword>
<comment type="function">
    <text evidence="1">Catalyzes the conversion of N-formimidoyl-L-glutamate to L-glutamate and formamide.</text>
</comment>
<comment type="catalytic activity">
    <reaction evidence="1">
        <text>N-formimidoyl-L-glutamate + H2O = formamide + L-glutamate</text>
        <dbReference type="Rhea" id="RHEA:22492"/>
        <dbReference type="ChEBI" id="CHEBI:15377"/>
        <dbReference type="ChEBI" id="CHEBI:16397"/>
        <dbReference type="ChEBI" id="CHEBI:29985"/>
        <dbReference type="ChEBI" id="CHEBI:58928"/>
        <dbReference type="EC" id="3.5.3.8"/>
    </reaction>
</comment>
<comment type="cofactor">
    <cofactor evidence="1">
        <name>Mn(2+)</name>
        <dbReference type="ChEBI" id="CHEBI:29035"/>
    </cofactor>
    <text evidence="1">Binds 2 manganese ions per subunit.</text>
</comment>
<comment type="pathway">
    <text evidence="1">Amino-acid degradation; L-histidine degradation into L-glutamate; L-glutamate from N-formimidoyl-L-glutamate (hydrolase route): step 1/1.</text>
</comment>
<comment type="similarity">
    <text evidence="1">Belongs to the arginase family.</text>
</comment>
<dbReference type="EC" id="3.5.3.8" evidence="1"/>
<dbReference type="EMBL" id="CP000076">
    <property type="protein sequence ID" value="AAY95759.1"/>
    <property type="molecule type" value="Genomic_DNA"/>
</dbReference>
<dbReference type="RefSeq" id="WP_011058725.1">
    <property type="nucleotide sequence ID" value="NC_004129.6"/>
</dbReference>
<dbReference type="SMR" id="Q4KJT9"/>
<dbReference type="STRING" id="220664.PFL_0349"/>
<dbReference type="KEGG" id="pfl:PFL_0349"/>
<dbReference type="PATRIC" id="fig|220664.5.peg.358"/>
<dbReference type="eggNOG" id="COG0010">
    <property type="taxonomic scope" value="Bacteria"/>
</dbReference>
<dbReference type="HOGENOM" id="CLU_039478_2_0_6"/>
<dbReference type="UniPathway" id="UPA00379">
    <property type="reaction ID" value="UER00552"/>
</dbReference>
<dbReference type="Proteomes" id="UP000008540">
    <property type="component" value="Chromosome"/>
</dbReference>
<dbReference type="GO" id="GO:0008783">
    <property type="term" value="F:agmatinase activity"/>
    <property type="evidence" value="ECO:0007669"/>
    <property type="project" value="TreeGrafter"/>
</dbReference>
<dbReference type="GO" id="GO:0050415">
    <property type="term" value="F:formimidoylglutamase activity"/>
    <property type="evidence" value="ECO:0007669"/>
    <property type="project" value="UniProtKB-UniRule"/>
</dbReference>
<dbReference type="GO" id="GO:0030145">
    <property type="term" value="F:manganese ion binding"/>
    <property type="evidence" value="ECO:0007669"/>
    <property type="project" value="UniProtKB-UniRule"/>
</dbReference>
<dbReference type="GO" id="GO:0019556">
    <property type="term" value="P:L-histidine catabolic process to glutamate and formamide"/>
    <property type="evidence" value="ECO:0007669"/>
    <property type="project" value="UniProtKB-UniPathway"/>
</dbReference>
<dbReference type="GO" id="GO:0019557">
    <property type="term" value="P:L-histidine catabolic process to glutamate and formate"/>
    <property type="evidence" value="ECO:0007669"/>
    <property type="project" value="UniProtKB-UniPathway"/>
</dbReference>
<dbReference type="GO" id="GO:0033389">
    <property type="term" value="P:putrescine biosynthetic process from arginine, via agmatine"/>
    <property type="evidence" value="ECO:0007669"/>
    <property type="project" value="TreeGrafter"/>
</dbReference>
<dbReference type="CDD" id="cd09988">
    <property type="entry name" value="Formimidoylglutamase"/>
    <property type="match status" value="1"/>
</dbReference>
<dbReference type="Gene3D" id="3.40.800.10">
    <property type="entry name" value="Ureohydrolase domain"/>
    <property type="match status" value="1"/>
</dbReference>
<dbReference type="HAMAP" id="MF_00737">
    <property type="entry name" value="Formimidoylglutam"/>
    <property type="match status" value="1"/>
</dbReference>
<dbReference type="InterPro" id="IPR005923">
    <property type="entry name" value="HutG"/>
</dbReference>
<dbReference type="InterPro" id="IPR006035">
    <property type="entry name" value="Ureohydrolase"/>
</dbReference>
<dbReference type="InterPro" id="IPR023696">
    <property type="entry name" value="Ureohydrolase_dom_sf"/>
</dbReference>
<dbReference type="NCBIfam" id="TIGR01227">
    <property type="entry name" value="hutG"/>
    <property type="match status" value="1"/>
</dbReference>
<dbReference type="PANTHER" id="PTHR11358">
    <property type="entry name" value="ARGINASE/AGMATINASE"/>
    <property type="match status" value="1"/>
</dbReference>
<dbReference type="PANTHER" id="PTHR11358:SF35">
    <property type="entry name" value="FORMIMIDOYLGLUTAMASE"/>
    <property type="match status" value="1"/>
</dbReference>
<dbReference type="Pfam" id="PF00491">
    <property type="entry name" value="Arginase"/>
    <property type="match status" value="1"/>
</dbReference>
<dbReference type="PIRSF" id="PIRSF036979">
    <property type="entry name" value="Arginase"/>
    <property type="match status" value="1"/>
</dbReference>
<dbReference type="SUPFAM" id="SSF52768">
    <property type="entry name" value="Arginase/deacetylase"/>
    <property type="match status" value="1"/>
</dbReference>
<dbReference type="PROSITE" id="PS51409">
    <property type="entry name" value="ARGINASE_2"/>
    <property type="match status" value="1"/>
</dbReference>
<sequence length="312" mass="34039">MISNAPMHLWQGRIDLAEGLAARRWHQWVQPWAEQQPAGIALLGLACDEGVKRNQGRTGASQGPAALRAALANLAWHGTGPLYDAGDVTCTDHHLESAQKRYAERLGLLLEQGHLVLGLGGGHEIAFASFSGLADHLRRQQPCPRIGILNFDAHFDLRHAPQSSSGTPFRQIAEYCRQAGMPFEYCCLGVSELSNTQALFEQARELDVRYLLDRQMQGWNLPAVEACLDAFLDGIDVLYMTLCLDVLPASQAPGVSAPSAHGVDVQVVEHLVRRARASGKLRVADIAELNPGLDQDQRTARVAARLLASLIH</sequence>
<reference key="1">
    <citation type="journal article" date="2005" name="Nat. Biotechnol.">
        <title>Complete genome sequence of the plant commensal Pseudomonas fluorescens Pf-5.</title>
        <authorList>
            <person name="Paulsen I.T."/>
            <person name="Press C.M."/>
            <person name="Ravel J."/>
            <person name="Kobayashi D.Y."/>
            <person name="Myers G.S.A."/>
            <person name="Mavrodi D.V."/>
            <person name="DeBoy R.T."/>
            <person name="Seshadri R."/>
            <person name="Ren Q."/>
            <person name="Madupu R."/>
            <person name="Dodson R.J."/>
            <person name="Durkin A.S."/>
            <person name="Brinkac L.M."/>
            <person name="Daugherty S.C."/>
            <person name="Sullivan S.A."/>
            <person name="Rosovitz M.J."/>
            <person name="Gwinn M.L."/>
            <person name="Zhou L."/>
            <person name="Schneider D.J."/>
            <person name="Cartinhour S.W."/>
            <person name="Nelson W.C."/>
            <person name="Weidman J."/>
            <person name="Watkins K."/>
            <person name="Tran K."/>
            <person name="Khouri H."/>
            <person name="Pierson E.A."/>
            <person name="Pierson L.S. III"/>
            <person name="Thomashow L.S."/>
            <person name="Loper J.E."/>
        </authorList>
    </citation>
    <scope>NUCLEOTIDE SEQUENCE [LARGE SCALE GENOMIC DNA]</scope>
    <source>
        <strain>ATCC BAA-477 / NRRL B-23932 / Pf-5</strain>
    </source>
</reference>